<sequence>MLKLIWCQTLNGGISKNNKLPWYIKEELDHFYKTTKNHKIIMGKNTFDSLDQKPLNNRTNIIFSSIMQTPEDESYFVTNDFQQVLNDAKKEDIFIIGGKELFDIFLAYADVLIVSVLKDYYDCDLYMKVDYNNFNLDKQDVYDNFIVNYYSNKKEK</sequence>
<gene>
    <name type="primary">folA</name>
    <name type="ordered locus">UU114</name>
</gene>
<evidence type="ECO:0000250" key="1"/>
<evidence type="ECO:0000255" key="2">
    <source>
        <dbReference type="PROSITE-ProRule" id="PRU00660"/>
    </source>
</evidence>
<evidence type="ECO:0000305" key="3"/>
<comment type="function">
    <text evidence="1">Key enzyme in folate metabolism. Catalyzes an essential reaction for de novo glycine and purine synthesis, and for DNA precursor synthesis (By similarity).</text>
</comment>
<comment type="catalytic activity">
    <reaction evidence="2">
        <text>(6S)-5,6,7,8-tetrahydrofolate + NADP(+) = 7,8-dihydrofolate + NADPH + H(+)</text>
        <dbReference type="Rhea" id="RHEA:15009"/>
        <dbReference type="ChEBI" id="CHEBI:15378"/>
        <dbReference type="ChEBI" id="CHEBI:57451"/>
        <dbReference type="ChEBI" id="CHEBI:57453"/>
        <dbReference type="ChEBI" id="CHEBI:57783"/>
        <dbReference type="ChEBI" id="CHEBI:58349"/>
        <dbReference type="EC" id="1.5.1.3"/>
    </reaction>
</comment>
<comment type="pathway">
    <text>Cofactor biosynthesis; tetrahydrofolate biosynthesis; 5,6,7,8-tetrahydrofolate from 7,8-dihydrofolate: step 1/1.</text>
</comment>
<comment type="similarity">
    <text evidence="3">Belongs to the dihydrofolate reductase family.</text>
</comment>
<keyword id="KW-0521">NADP</keyword>
<keyword id="KW-0554">One-carbon metabolism</keyword>
<keyword id="KW-0560">Oxidoreductase</keyword>
<keyword id="KW-1185">Reference proteome</keyword>
<proteinExistence type="inferred from homology"/>
<organism>
    <name type="scientific">Ureaplasma parvum serovar 3 (strain ATCC 700970)</name>
    <dbReference type="NCBI Taxonomy" id="273119"/>
    <lineage>
        <taxon>Bacteria</taxon>
        <taxon>Bacillati</taxon>
        <taxon>Mycoplasmatota</taxon>
        <taxon>Mycoplasmoidales</taxon>
        <taxon>Mycoplasmoidaceae</taxon>
        <taxon>Ureaplasma</taxon>
    </lineage>
</organism>
<reference key="1">
    <citation type="journal article" date="2000" name="Nature">
        <title>The complete sequence of the mucosal pathogen Ureaplasma urealyticum.</title>
        <authorList>
            <person name="Glass J.I."/>
            <person name="Lefkowitz E.J."/>
            <person name="Glass J.S."/>
            <person name="Heiner C.R."/>
            <person name="Chen E.Y."/>
            <person name="Cassell G.H."/>
        </authorList>
    </citation>
    <scope>NUCLEOTIDE SEQUENCE [LARGE SCALE GENOMIC DNA]</scope>
    <source>
        <strain>ATCC 700970</strain>
    </source>
</reference>
<feature type="chain" id="PRO_0000186419" description="Dihydrofolate reductase">
    <location>
        <begin position="1"/>
        <end position="156"/>
    </location>
</feature>
<feature type="domain" description="DHFR" evidence="2">
    <location>
        <begin position="1"/>
        <end position="156"/>
    </location>
</feature>
<dbReference type="EC" id="1.5.1.3"/>
<dbReference type="EMBL" id="AF222894">
    <property type="protein sequence ID" value="AAF30520.1"/>
    <property type="molecule type" value="Genomic_DNA"/>
</dbReference>
<dbReference type="RefSeq" id="WP_006689146.1">
    <property type="nucleotide sequence ID" value="NC_002162.1"/>
</dbReference>
<dbReference type="SMR" id="Q9PR30"/>
<dbReference type="STRING" id="273119.UU114"/>
<dbReference type="EnsemblBacteria" id="AAF30520">
    <property type="protein sequence ID" value="AAF30520"/>
    <property type="gene ID" value="UU114"/>
</dbReference>
<dbReference type="GeneID" id="29672261"/>
<dbReference type="KEGG" id="uur:UU114"/>
<dbReference type="eggNOG" id="COG0262">
    <property type="taxonomic scope" value="Bacteria"/>
</dbReference>
<dbReference type="HOGENOM" id="CLU_043966_5_2_14"/>
<dbReference type="OrthoDB" id="9804315at2"/>
<dbReference type="UniPathway" id="UPA00077">
    <property type="reaction ID" value="UER00158"/>
</dbReference>
<dbReference type="Proteomes" id="UP000000423">
    <property type="component" value="Chromosome"/>
</dbReference>
<dbReference type="GO" id="GO:0005829">
    <property type="term" value="C:cytosol"/>
    <property type="evidence" value="ECO:0007669"/>
    <property type="project" value="TreeGrafter"/>
</dbReference>
<dbReference type="GO" id="GO:0004146">
    <property type="term" value="F:dihydrofolate reductase activity"/>
    <property type="evidence" value="ECO:0007669"/>
    <property type="project" value="UniProtKB-EC"/>
</dbReference>
<dbReference type="GO" id="GO:0050661">
    <property type="term" value="F:NADP binding"/>
    <property type="evidence" value="ECO:0007669"/>
    <property type="project" value="InterPro"/>
</dbReference>
<dbReference type="GO" id="GO:0046452">
    <property type="term" value="P:dihydrofolate metabolic process"/>
    <property type="evidence" value="ECO:0007669"/>
    <property type="project" value="TreeGrafter"/>
</dbReference>
<dbReference type="GO" id="GO:0046655">
    <property type="term" value="P:folic acid metabolic process"/>
    <property type="evidence" value="ECO:0007669"/>
    <property type="project" value="TreeGrafter"/>
</dbReference>
<dbReference type="GO" id="GO:0006730">
    <property type="term" value="P:one-carbon metabolic process"/>
    <property type="evidence" value="ECO:0007669"/>
    <property type="project" value="UniProtKB-KW"/>
</dbReference>
<dbReference type="GO" id="GO:0046654">
    <property type="term" value="P:tetrahydrofolate biosynthetic process"/>
    <property type="evidence" value="ECO:0007669"/>
    <property type="project" value="UniProtKB-UniPathway"/>
</dbReference>
<dbReference type="CDD" id="cd00209">
    <property type="entry name" value="DHFR"/>
    <property type="match status" value="1"/>
</dbReference>
<dbReference type="Gene3D" id="3.40.430.10">
    <property type="entry name" value="Dihydrofolate Reductase, subunit A"/>
    <property type="match status" value="1"/>
</dbReference>
<dbReference type="InterPro" id="IPR012259">
    <property type="entry name" value="DHFR"/>
</dbReference>
<dbReference type="InterPro" id="IPR024072">
    <property type="entry name" value="DHFR-like_dom_sf"/>
</dbReference>
<dbReference type="InterPro" id="IPR001796">
    <property type="entry name" value="DHFR_dom"/>
</dbReference>
<dbReference type="PANTHER" id="PTHR48069">
    <property type="entry name" value="DIHYDROFOLATE REDUCTASE"/>
    <property type="match status" value="1"/>
</dbReference>
<dbReference type="PANTHER" id="PTHR48069:SF3">
    <property type="entry name" value="DIHYDROFOLATE REDUCTASE"/>
    <property type="match status" value="1"/>
</dbReference>
<dbReference type="Pfam" id="PF00186">
    <property type="entry name" value="DHFR_1"/>
    <property type="match status" value="1"/>
</dbReference>
<dbReference type="PRINTS" id="PR00070">
    <property type="entry name" value="DHFR"/>
</dbReference>
<dbReference type="SUPFAM" id="SSF53597">
    <property type="entry name" value="Dihydrofolate reductase-like"/>
    <property type="match status" value="1"/>
</dbReference>
<dbReference type="PROSITE" id="PS51330">
    <property type="entry name" value="DHFR_2"/>
    <property type="match status" value="1"/>
</dbReference>
<name>DYR_UREPA</name>
<accession>Q9PR30</accession>
<protein>
    <recommendedName>
        <fullName>Dihydrofolate reductase</fullName>
        <ecNumber>1.5.1.3</ecNumber>
    </recommendedName>
</protein>